<protein>
    <recommendedName>
        <fullName evidence="1">Large ribosomal subunit protein bL17</fullName>
    </recommendedName>
    <alternativeName>
        <fullName evidence="2">50S ribosomal protein L17</fullName>
    </alternativeName>
</protein>
<evidence type="ECO:0000255" key="1">
    <source>
        <dbReference type="HAMAP-Rule" id="MF_01368"/>
    </source>
</evidence>
<evidence type="ECO:0000305" key="2"/>
<reference key="1">
    <citation type="journal article" date="2009" name="PLoS Genet.">
        <title>Organised genome dynamics in the Escherichia coli species results in highly diverse adaptive paths.</title>
        <authorList>
            <person name="Touchon M."/>
            <person name="Hoede C."/>
            <person name="Tenaillon O."/>
            <person name="Barbe V."/>
            <person name="Baeriswyl S."/>
            <person name="Bidet P."/>
            <person name="Bingen E."/>
            <person name="Bonacorsi S."/>
            <person name="Bouchier C."/>
            <person name="Bouvet O."/>
            <person name="Calteau A."/>
            <person name="Chiapello H."/>
            <person name="Clermont O."/>
            <person name="Cruveiller S."/>
            <person name="Danchin A."/>
            <person name="Diard M."/>
            <person name="Dossat C."/>
            <person name="Karoui M.E."/>
            <person name="Frapy E."/>
            <person name="Garry L."/>
            <person name="Ghigo J.M."/>
            <person name="Gilles A.M."/>
            <person name="Johnson J."/>
            <person name="Le Bouguenec C."/>
            <person name="Lescat M."/>
            <person name="Mangenot S."/>
            <person name="Martinez-Jehanne V."/>
            <person name="Matic I."/>
            <person name="Nassif X."/>
            <person name="Oztas S."/>
            <person name="Petit M.A."/>
            <person name="Pichon C."/>
            <person name="Rouy Z."/>
            <person name="Ruf C.S."/>
            <person name="Schneider D."/>
            <person name="Tourret J."/>
            <person name="Vacherie B."/>
            <person name="Vallenet D."/>
            <person name="Medigue C."/>
            <person name="Rocha E.P.C."/>
            <person name="Denamur E."/>
        </authorList>
    </citation>
    <scope>NUCLEOTIDE SEQUENCE [LARGE SCALE GENOMIC DNA]</scope>
    <source>
        <strain>S88 / ExPEC</strain>
    </source>
</reference>
<organism>
    <name type="scientific">Escherichia coli O45:K1 (strain S88 / ExPEC)</name>
    <dbReference type="NCBI Taxonomy" id="585035"/>
    <lineage>
        <taxon>Bacteria</taxon>
        <taxon>Pseudomonadati</taxon>
        <taxon>Pseudomonadota</taxon>
        <taxon>Gammaproteobacteria</taxon>
        <taxon>Enterobacterales</taxon>
        <taxon>Enterobacteriaceae</taxon>
        <taxon>Escherichia</taxon>
    </lineage>
</organism>
<comment type="subunit">
    <text evidence="1">Part of the 50S ribosomal subunit. Contacts protein L32.</text>
</comment>
<comment type="similarity">
    <text evidence="1">Belongs to the bacterial ribosomal protein bL17 family.</text>
</comment>
<proteinExistence type="inferred from homology"/>
<accession>B7MCR0</accession>
<name>RL17_ECO45</name>
<keyword id="KW-1185">Reference proteome</keyword>
<keyword id="KW-0687">Ribonucleoprotein</keyword>
<keyword id="KW-0689">Ribosomal protein</keyword>
<gene>
    <name evidence="1" type="primary">rplQ</name>
    <name type="ordered locus">ECS88_3682</name>
</gene>
<sequence length="127" mass="14365">MRHRKSGRQLNRNSSHRQAMFRNMAGSLVRHEIIKTTLPKAKELRRVVEPLITLAKTDSVANRRLAFARTRDNEIVAKLFNELGPRFASRAGGYTRILKCGFRAGDNAPMAYIELVDRSEKAEAAAE</sequence>
<dbReference type="EMBL" id="CU928161">
    <property type="protein sequence ID" value="CAR04899.1"/>
    <property type="molecule type" value="Genomic_DNA"/>
</dbReference>
<dbReference type="RefSeq" id="WP_001216368.1">
    <property type="nucleotide sequence ID" value="NC_011742.1"/>
</dbReference>
<dbReference type="EMDB" id="EMD-8826"/>
<dbReference type="EMDB" id="EMD-8829"/>
<dbReference type="SMR" id="B7MCR0"/>
<dbReference type="GeneID" id="97442834"/>
<dbReference type="KEGG" id="ecz:ECS88_3682"/>
<dbReference type="HOGENOM" id="CLU_074407_2_0_6"/>
<dbReference type="Proteomes" id="UP000000747">
    <property type="component" value="Chromosome"/>
</dbReference>
<dbReference type="GO" id="GO:0022625">
    <property type="term" value="C:cytosolic large ribosomal subunit"/>
    <property type="evidence" value="ECO:0007669"/>
    <property type="project" value="TreeGrafter"/>
</dbReference>
<dbReference type="GO" id="GO:0003735">
    <property type="term" value="F:structural constituent of ribosome"/>
    <property type="evidence" value="ECO:0007669"/>
    <property type="project" value="InterPro"/>
</dbReference>
<dbReference type="GO" id="GO:0006412">
    <property type="term" value="P:translation"/>
    <property type="evidence" value="ECO:0007669"/>
    <property type="project" value="UniProtKB-UniRule"/>
</dbReference>
<dbReference type="FunFam" id="3.90.1030.10:FF:000001">
    <property type="entry name" value="50S ribosomal protein L17"/>
    <property type="match status" value="1"/>
</dbReference>
<dbReference type="Gene3D" id="3.90.1030.10">
    <property type="entry name" value="Ribosomal protein L17"/>
    <property type="match status" value="1"/>
</dbReference>
<dbReference type="HAMAP" id="MF_01368">
    <property type="entry name" value="Ribosomal_bL17"/>
    <property type="match status" value="1"/>
</dbReference>
<dbReference type="InterPro" id="IPR000456">
    <property type="entry name" value="Ribosomal_bL17"/>
</dbReference>
<dbReference type="InterPro" id="IPR047859">
    <property type="entry name" value="Ribosomal_bL17_CS"/>
</dbReference>
<dbReference type="InterPro" id="IPR036373">
    <property type="entry name" value="Ribosomal_bL17_sf"/>
</dbReference>
<dbReference type="NCBIfam" id="TIGR00059">
    <property type="entry name" value="L17"/>
    <property type="match status" value="1"/>
</dbReference>
<dbReference type="PANTHER" id="PTHR14413:SF16">
    <property type="entry name" value="LARGE RIBOSOMAL SUBUNIT PROTEIN BL17M"/>
    <property type="match status" value="1"/>
</dbReference>
<dbReference type="PANTHER" id="PTHR14413">
    <property type="entry name" value="RIBOSOMAL PROTEIN L17"/>
    <property type="match status" value="1"/>
</dbReference>
<dbReference type="Pfam" id="PF01196">
    <property type="entry name" value="Ribosomal_L17"/>
    <property type="match status" value="1"/>
</dbReference>
<dbReference type="SUPFAM" id="SSF64263">
    <property type="entry name" value="Prokaryotic ribosomal protein L17"/>
    <property type="match status" value="1"/>
</dbReference>
<dbReference type="PROSITE" id="PS01167">
    <property type="entry name" value="RIBOSOMAL_L17"/>
    <property type="match status" value="1"/>
</dbReference>
<feature type="chain" id="PRO_1000144416" description="Large ribosomal subunit protein bL17">
    <location>
        <begin position="1"/>
        <end position="127"/>
    </location>
</feature>